<feature type="chain" id="PRO_1000062755" description="Probable ECA polymerase">
    <location>
        <begin position="1"/>
        <end position="450"/>
    </location>
</feature>
<feature type="transmembrane region" description="Helical" evidence="1">
    <location>
        <begin position="6"/>
        <end position="26"/>
    </location>
</feature>
<feature type="transmembrane region" description="Helical" evidence="1">
    <location>
        <begin position="37"/>
        <end position="57"/>
    </location>
</feature>
<feature type="transmembrane region" description="Helical" evidence="1">
    <location>
        <begin position="63"/>
        <end position="83"/>
    </location>
</feature>
<feature type="transmembrane region" description="Helical" evidence="1">
    <location>
        <begin position="120"/>
        <end position="140"/>
    </location>
</feature>
<feature type="transmembrane region" description="Helical" evidence="1">
    <location>
        <begin position="155"/>
        <end position="175"/>
    </location>
</feature>
<feature type="transmembrane region" description="Helical" evidence="1">
    <location>
        <begin position="181"/>
        <end position="201"/>
    </location>
</feature>
<feature type="transmembrane region" description="Helical" evidence="1">
    <location>
        <begin position="207"/>
        <end position="227"/>
    </location>
</feature>
<feature type="transmembrane region" description="Helical" evidence="1">
    <location>
        <begin position="228"/>
        <end position="248"/>
    </location>
</feature>
<feature type="transmembrane region" description="Helical" evidence="1">
    <location>
        <begin position="341"/>
        <end position="361"/>
    </location>
</feature>
<feature type="transmembrane region" description="Helical" evidence="1">
    <location>
        <begin position="378"/>
        <end position="398"/>
    </location>
</feature>
<feature type="transmembrane region" description="Helical" evidence="1">
    <location>
        <begin position="410"/>
        <end position="430"/>
    </location>
</feature>
<name>WZYE_CITK8</name>
<sequence length="450" mass="51434">MSLMQFSGLLVVWLLSTLFIATLTWFEFRRVRFNFNVFFSLLFLLTFFFGFPLTSVLVFRFDVGVAPPEILLQALLSAACFYAVYYVTYKTRLRKRVTDVPRKPLFTMNRVETHLTWVMLMGIALVSVGIFFMHNGFLLFRLHSYSQIFSSEVSGVALKRFFYFFIPAMLVIYFLRQDSKAWLFFLVSTVAFGLLTYMIVGGTRANIIIAFAIFLFIGIIRGWISLWMLVAAGVLGIVGMFWLALKRYGLNVSGDEAFYTFLYLTRDTFSPWENLALLLQNYDNIDFQGLAPIVRDFYVFIPSWLWPGRPGIVLNSANYFTWEVLNNHSGLAISPTLIGSLVVMGGALFIPLGAVAVGLIIKWFDWLYELGNRETNRYKAAILHSFCFGAIFNMIVLAREGLDSFVSRVVFFLVIFGACLLVAKLLFWLFDCAGLVHQRAKPQPQTQVEG</sequence>
<reference key="1">
    <citation type="submission" date="2007-08" db="EMBL/GenBank/DDBJ databases">
        <authorList>
            <consortium name="The Citrobacter koseri Genome Sequencing Project"/>
            <person name="McClelland M."/>
            <person name="Sanderson E.K."/>
            <person name="Porwollik S."/>
            <person name="Spieth J."/>
            <person name="Clifton W.S."/>
            <person name="Latreille P."/>
            <person name="Courtney L."/>
            <person name="Wang C."/>
            <person name="Pepin K."/>
            <person name="Bhonagiri V."/>
            <person name="Nash W."/>
            <person name="Johnson M."/>
            <person name="Thiruvilangam P."/>
            <person name="Wilson R."/>
        </authorList>
    </citation>
    <scope>NUCLEOTIDE SEQUENCE [LARGE SCALE GENOMIC DNA]</scope>
    <source>
        <strain>ATCC BAA-895 / CDC 4225-83 / SGSC4696</strain>
    </source>
</reference>
<dbReference type="EMBL" id="CP000822">
    <property type="protein sequence ID" value="ABV11309.1"/>
    <property type="molecule type" value="Genomic_DNA"/>
</dbReference>
<dbReference type="RefSeq" id="WP_012131144.1">
    <property type="nucleotide sequence ID" value="NC_009792.1"/>
</dbReference>
<dbReference type="STRING" id="290338.CKO_00135"/>
<dbReference type="GeneID" id="45134433"/>
<dbReference type="KEGG" id="cko:CKO_00135"/>
<dbReference type="HOGENOM" id="CLU_049711_0_0_6"/>
<dbReference type="OrthoDB" id="6415259at2"/>
<dbReference type="UniPathway" id="UPA00566"/>
<dbReference type="Proteomes" id="UP000008148">
    <property type="component" value="Chromosome"/>
</dbReference>
<dbReference type="GO" id="GO:0005886">
    <property type="term" value="C:plasma membrane"/>
    <property type="evidence" value="ECO:0007669"/>
    <property type="project" value="UniProtKB-SubCell"/>
</dbReference>
<dbReference type="GO" id="GO:0009246">
    <property type="term" value="P:enterobacterial common antigen biosynthetic process"/>
    <property type="evidence" value="ECO:0007669"/>
    <property type="project" value="UniProtKB-UniRule"/>
</dbReference>
<dbReference type="HAMAP" id="MF_01003">
    <property type="entry name" value="WzyE"/>
    <property type="match status" value="1"/>
</dbReference>
<dbReference type="InterPro" id="IPR010691">
    <property type="entry name" value="WzyE"/>
</dbReference>
<dbReference type="NCBIfam" id="NF002820">
    <property type="entry name" value="PRK02975.1"/>
    <property type="match status" value="1"/>
</dbReference>
<dbReference type="Pfam" id="PF06899">
    <property type="entry name" value="WzyE"/>
    <property type="match status" value="1"/>
</dbReference>
<gene>
    <name evidence="1" type="primary">wzyE</name>
    <name type="ordered locus">CKO_00135</name>
</gene>
<accession>A8ACU6</accession>
<organism>
    <name type="scientific">Citrobacter koseri (strain ATCC BAA-895 / CDC 4225-83 / SGSC4696)</name>
    <dbReference type="NCBI Taxonomy" id="290338"/>
    <lineage>
        <taxon>Bacteria</taxon>
        <taxon>Pseudomonadati</taxon>
        <taxon>Pseudomonadota</taxon>
        <taxon>Gammaproteobacteria</taxon>
        <taxon>Enterobacterales</taxon>
        <taxon>Enterobacteriaceae</taxon>
        <taxon>Citrobacter</taxon>
    </lineage>
</organism>
<evidence type="ECO:0000255" key="1">
    <source>
        <dbReference type="HAMAP-Rule" id="MF_01003"/>
    </source>
</evidence>
<keyword id="KW-0997">Cell inner membrane</keyword>
<keyword id="KW-1003">Cell membrane</keyword>
<keyword id="KW-0472">Membrane</keyword>
<keyword id="KW-1185">Reference proteome</keyword>
<keyword id="KW-0812">Transmembrane</keyword>
<keyword id="KW-1133">Transmembrane helix</keyword>
<protein>
    <recommendedName>
        <fullName evidence="1">Probable ECA polymerase</fullName>
    </recommendedName>
</protein>
<proteinExistence type="inferred from homology"/>
<comment type="function">
    <text evidence="1">Probably involved in the polymerization of enterobacterial common antigen (ECA) trisaccharide repeat units.</text>
</comment>
<comment type="pathway">
    <text evidence="1">Bacterial outer membrane biogenesis; enterobacterial common antigen biosynthesis.</text>
</comment>
<comment type="subunit">
    <text evidence="1">Probably part of a complex composed of WzxE, WzyE and WzzE.</text>
</comment>
<comment type="subcellular location">
    <subcellularLocation>
        <location evidence="1">Cell inner membrane</location>
        <topology evidence="1">Multi-pass membrane protein</topology>
    </subcellularLocation>
</comment>
<comment type="similarity">
    <text evidence="1">Belongs to the WzyE family.</text>
</comment>